<accession>Q57PD4</accession>
<sequence length="108" mass="11948">MLKTTLLFFVTALCEIIGCFLPWLWLKRGASVWWLLPAAASLALFVWLLTLHPAASGRVYAAYGGVYVCTALLWLRVVDGVRLTVYDWCGALIALCGMLIIVVGWGRT</sequence>
<protein>
    <recommendedName>
        <fullName evidence="1">UPF0060 membrane protein YnfA</fullName>
    </recommendedName>
</protein>
<proteinExistence type="inferred from homology"/>
<organism>
    <name type="scientific">Salmonella choleraesuis (strain SC-B67)</name>
    <dbReference type="NCBI Taxonomy" id="321314"/>
    <lineage>
        <taxon>Bacteria</taxon>
        <taxon>Pseudomonadati</taxon>
        <taxon>Pseudomonadota</taxon>
        <taxon>Gammaproteobacteria</taxon>
        <taxon>Enterobacterales</taxon>
        <taxon>Enterobacteriaceae</taxon>
        <taxon>Salmonella</taxon>
    </lineage>
</organism>
<name>YNFA_SALCH</name>
<keyword id="KW-0997">Cell inner membrane</keyword>
<keyword id="KW-1003">Cell membrane</keyword>
<keyword id="KW-0472">Membrane</keyword>
<keyword id="KW-0812">Transmembrane</keyword>
<keyword id="KW-1133">Transmembrane helix</keyword>
<reference key="1">
    <citation type="journal article" date="2005" name="Nucleic Acids Res.">
        <title>The genome sequence of Salmonella enterica serovar Choleraesuis, a highly invasive and resistant zoonotic pathogen.</title>
        <authorList>
            <person name="Chiu C.-H."/>
            <person name="Tang P."/>
            <person name="Chu C."/>
            <person name="Hu S."/>
            <person name="Bao Q."/>
            <person name="Yu J."/>
            <person name="Chou Y.-Y."/>
            <person name="Wang H.-S."/>
            <person name="Lee Y.-S."/>
        </authorList>
    </citation>
    <scope>NUCLEOTIDE SEQUENCE [LARGE SCALE GENOMIC DNA]</scope>
    <source>
        <strain>SC-B67</strain>
    </source>
</reference>
<gene>
    <name evidence="1" type="primary">ynfA</name>
    <name type="ordered locus">SCH_1521</name>
</gene>
<dbReference type="EMBL" id="AE017220">
    <property type="protein sequence ID" value="AAX65427.1"/>
    <property type="status" value="ALT_INIT"/>
    <property type="molecule type" value="Genomic_DNA"/>
</dbReference>
<dbReference type="RefSeq" id="WP_000921389.1">
    <property type="nucleotide sequence ID" value="NC_006905.1"/>
</dbReference>
<dbReference type="SMR" id="Q57PD4"/>
<dbReference type="KEGG" id="sec:SCH_1521"/>
<dbReference type="HOGENOM" id="CLU_117653_2_1_6"/>
<dbReference type="Proteomes" id="UP000000538">
    <property type="component" value="Chromosome"/>
</dbReference>
<dbReference type="GO" id="GO:0005886">
    <property type="term" value="C:plasma membrane"/>
    <property type="evidence" value="ECO:0007669"/>
    <property type="project" value="UniProtKB-SubCell"/>
</dbReference>
<dbReference type="HAMAP" id="MF_00010">
    <property type="entry name" value="UPF0060"/>
    <property type="match status" value="1"/>
</dbReference>
<dbReference type="InterPro" id="IPR003844">
    <property type="entry name" value="UPF0060"/>
</dbReference>
<dbReference type="NCBIfam" id="NF002586">
    <property type="entry name" value="PRK02237.1"/>
    <property type="match status" value="1"/>
</dbReference>
<dbReference type="PANTHER" id="PTHR36116">
    <property type="entry name" value="UPF0060 MEMBRANE PROTEIN YNFA"/>
    <property type="match status" value="1"/>
</dbReference>
<dbReference type="PANTHER" id="PTHR36116:SF1">
    <property type="entry name" value="UPF0060 MEMBRANE PROTEIN YNFA"/>
    <property type="match status" value="1"/>
</dbReference>
<dbReference type="Pfam" id="PF02694">
    <property type="entry name" value="UPF0060"/>
    <property type="match status" value="1"/>
</dbReference>
<dbReference type="SUPFAM" id="SSF103481">
    <property type="entry name" value="Multidrug resistance efflux transporter EmrE"/>
    <property type="match status" value="1"/>
</dbReference>
<comment type="subcellular location">
    <subcellularLocation>
        <location evidence="1">Cell inner membrane</location>
        <topology evidence="1">Multi-pass membrane protein</topology>
    </subcellularLocation>
</comment>
<comment type="similarity">
    <text evidence="1">Belongs to the UPF0060 family.</text>
</comment>
<comment type="sequence caution" evidence="2">
    <conflict type="erroneous initiation">
        <sequence resource="EMBL-CDS" id="AAX65427"/>
    </conflict>
</comment>
<feature type="chain" id="PRO_0000282262" description="UPF0060 membrane protein YnfA">
    <location>
        <begin position="1"/>
        <end position="108"/>
    </location>
</feature>
<feature type="topological domain" description="Periplasmic" evidence="1">
    <location>
        <begin position="1"/>
        <end position="5"/>
    </location>
</feature>
<feature type="transmembrane region" description="Helical" evidence="1">
    <location>
        <begin position="6"/>
        <end position="26"/>
    </location>
</feature>
<feature type="topological domain" description="Cytoplasmic" evidence="1">
    <location>
        <begin position="27"/>
        <end position="30"/>
    </location>
</feature>
<feature type="transmembrane region" description="Helical" evidence="1">
    <location>
        <begin position="31"/>
        <end position="51"/>
    </location>
</feature>
<feature type="topological domain" description="Periplasmic" evidence="1">
    <location>
        <begin position="52"/>
        <end position="60"/>
    </location>
</feature>
<feature type="transmembrane region" description="Helical" evidence="1">
    <location>
        <begin position="61"/>
        <end position="81"/>
    </location>
</feature>
<feature type="topological domain" description="Cytoplasmic" evidence="1">
    <location>
        <begin position="82"/>
        <end position="84"/>
    </location>
</feature>
<feature type="transmembrane region" description="Helical" evidence="1">
    <location>
        <begin position="85"/>
        <end position="105"/>
    </location>
</feature>
<feature type="topological domain" description="Periplasmic" evidence="1">
    <location>
        <begin position="106"/>
        <end position="108"/>
    </location>
</feature>
<evidence type="ECO:0000255" key="1">
    <source>
        <dbReference type="HAMAP-Rule" id="MF_00010"/>
    </source>
</evidence>
<evidence type="ECO:0000305" key="2"/>